<organism>
    <name type="scientific">Emericella nidulans (strain FGSC A4 / ATCC 38163 / CBS 112.46 / NRRL 194 / M139)</name>
    <name type="common">Aspergillus nidulans</name>
    <dbReference type="NCBI Taxonomy" id="227321"/>
    <lineage>
        <taxon>Eukaryota</taxon>
        <taxon>Fungi</taxon>
        <taxon>Dikarya</taxon>
        <taxon>Ascomycota</taxon>
        <taxon>Pezizomycotina</taxon>
        <taxon>Eurotiomycetes</taxon>
        <taxon>Eurotiomycetidae</taxon>
        <taxon>Eurotiales</taxon>
        <taxon>Aspergillaceae</taxon>
        <taxon>Aspergillus</taxon>
        <taxon>Aspergillus subgen. Nidulantes</taxon>
    </lineage>
</organism>
<dbReference type="EC" id="3.4.22.-"/>
<dbReference type="EMBL" id="AF528964">
    <property type="protein sequence ID" value="AAO13381.1"/>
    <property type="molecule type" value="mRNA"/>
</dbReference>
<dbReference type="EMBL" id="AACD01000098">
    <property type="protein sequence ID" value="EAA62805.1"/>
    <property type="molecule type" value="Genomic_DNA"/>
</dbReference>
<dbReference type="EMBL" id="BN001305">
    <property type="protein sequence ID" value="CBF81352.1"/>
    <property type="status" value="ALT_SEQ"/>
    <property type="molecule type" value="Genomic_DNA"/>
</dbReference>
<dbReference type="RefSeq" id="XP_663316.1">
    <property type="nucleotide sequence ID" value="XM_658224.1"/>
</dbReference>
<dbReference type="SMR" id="Q8J140"/>
<dbReference type="FunCoup" id="Q8J140">
    <property type="interactions" value="357"/>
</dbReference>
<dbReference type="STRING" id="227321.Q8J140"/>
<dbReference type="KEGG" id="ani:ANIA_05712"/>
<dbReference type="eggNOG" id="KOG1546">
    <property type="taxonomic scope" value="Eukaryota"/>
</dbReference>
<dbReference type="HOGENOM" id="CLU_029389_0_2_1"/>
<dbReference type="InParanoid" id="Q8J140"/>
<dbReference type="OrthoDB" id="3223806at2759"/>
<dbReference type="Proteomes" id="UP000000560">
    <property type="component" value="Chromosome V"/>
</dbReference>
<dbReference type="GO" id="GO:0005737">
    <property type="term" value="C:cytoplasm"/>
    <property type="evidence" value="ECO:0000318"/>
    <property type="project" value="GO_Central"/>
</dbReference>
<dbReference type="GO" id="GO:0004197">
    <property type="term" value="F:cysteine-type endopeptidase activity"/>
    <property type="evidence" value="ECO:0000318"/>
    <property type="project" value="GO_Central"/>
</dbReference>
<dbReference type="GO" id="GO:0006915">
    <property type="term" value="P:apoptotic process"/>
    <property type="evidence" value="ECO:0007669"/>
    <property type="project" value="UniProtKB-KW"/>
</dbReference>
<dbReference type="GO" id="GO:0006508">
    <property type="term" value="P:proteolysis"/>
    <property type="evidence" value="ECO:0000318"/>
    <property type="project" value="GO_Central"/>
</dbReference>
<dbReference type="Gene3D" id="3.40.50.12660">
    <property type="match status" value="1"/>
</dbReference>
<dbReference type="InterPro" id="IPR029030">
    <property type="entry name" value="Caspase-like_dom_sf"/>
</dbReference>
<dbReference type="InterPro" id="IPR050452">
    <property type="entry name" value="Metacaspase"/>
</dbReference>
<dbReference type="InterPro" id="IPR011600">
    <property type="entry name" value="Pept_C14_caspase"/>
</dbReference>
<dbReference type="PANTHER" id="PTHR48104:SF30">
    <property type="entry name" value="METACASPASE-1"/>
    <property type="match status" value="1"/>
</dbReference>
<dbReference type="PANTHER" id="PTHR48104">
    <property type="entry name" value="METACASPASE-4"/>
    <property type="match status" value="1"/>
</dbReference>
<dbReference type="Pfam" id="PF00656">
    <property type="entry name" value="Peptidase_C14"/>
    <property type="match status" value="1"/>
</dbReference>
<dbReference type="SUPFAM" id="SSF52129">
    <property type="entry name" value="Caspase-like"/>
    <property type="match status" value="1"/>
</dbReference>
<reference key="1">
    <citation type="journal article" date="2003" name="Mol. Cell. Biol.">
        <title>Induction of apoptosis by sphingoid long-chain bases in Aspergillus nidulans.</title>
        <authorList>
            <person name="Cheng J."/>
            <person name="Park T.-S."/>
            <person name="Chio L.-C."/>
            <person name="Fischl A.S."/>
            <person name="Ye X.S."/>
        </authorList>
    </citation>
    <scope>NUCLEOTIDE SEQUENCE [MRNA]</scope>
</reference>
<reference key="2">
    <citation type="journal article" date="2005" name="Nature">
        <title>Sequencing of Aspergillus nidulans and comparative analysis with A. fumigatus and A. oryzae.</title>
        <authorList>
            <person name="Galagan J.E."/>
            <person name="Calvo S.E."/>
            <person name="Cuomo C."/>
            <person name="Ma L.-J."/>
            <person name="Wortman J.R."/>
            <person name="Batzoglou S."/>
            <person name="Lee S.-I."/>
            <person name="Bastuerkmen M."/>
            <person name="Spevak C.C."/>
            <person name="Clutterbuck J."/>
            <person name="Kapitonov V."/>
            <person name="Jurka J."/>
            <person name="Scazzocchio C."/>
            <person name="Farman M.L."/>
            <person name="Butler J."/>
            <person name="Purcell S."/>
            <person name="Harris S."/>
            <person name="Braus G.H."/>
            <person name="Draht O."/>
            <person name="Busch S."/>
            <person name="D'Enfert C."/>
            <person name="Bouchier C."/>
            <person name="Goldman G.H."/>
            <person name="Bell-Pedersen D."/>
            <person name="Griffiths-Jones S."/>
            <person name="Doonan J.H."/>
            <person name="Yu J."/>
            <person name="Vienken K."/>
            <person name="Pain A."/>
            <person name="Freitag M."/>
            <person name="Selker E.U."/>
            <person name="Archer D.B."/>
            <person name="Penalva M.A."/>
            <person name="Oakley B.R."/>
            <person name="Momany M."/>
            <person name="Tanaka T."/>
            <person name="Kumagai T."/>
            <person name="Asai K."/>
            <person name="Machida M."/>
            <person name="Nierman W.C."/>
            <person name="Denning D.W."/>
            <person name="Caddick M.X."/>
            <person name="Hynes M."/>
            <person name="Paoletti M."/>
            <person name="Fischer R."/>
            <person name="Miller B.L."/>
            <person name="Dyer P.S."/>
            <person name="Sachs M.S."/>
            <person name="Osmani S.A."/>
            <person name="Birren B.W."/>
        </authorList>
    </citation>
    <scope>NUCLEOTIDE SEQUENCE [LARGE SCALE GENOMIC DNA]</scope>
    <source>
        <strain>FGSC A4 / ATCC 38163 / CBS 112.46 / NRRL 194 / M139</strain>
    </source>
</reference>
<reference key="3">
    <citation type="journal article" date="2009" name="Fungal Genet. Biol.">
        <title>The 2008 update of the Aspergillus nidulans genome annotation: a community effort.</title>
        <authorList>
            <person name="Wortman J.R."/>
            <person name="Gilsenan J.M."/>
            <person name="Joardar V."/>
            <person name="Deegan J."/>
            <person name="Clutterbuck J."/>
            <person name="Andersen M.R."/>
            <person name="Archer D."/>
            <person name="Bencina M."/>
            <person name="Braus G."/>
            <person name="Coutinho P."/>
            <person name="von Dohren H."/>
            <person name="Doonan J."/>
            <person name="Driessen A.J."/>
            <person name="Durek P."/>
            <person name="Espeso E."/>
            <person name="Fekete E."/>
            <person name="Flipphi M."/>
            <person name="Estrada C.G."/>
            <person name="Geysens S."/>
            <person name="Goldman G."/>
            <person name="de Groot P.W."/>
            <person name="Hansen K."/>
            <person name="Harris S.D."/>
            <person name="Heinekamp T."/>
            <person name="Helmstaedt K."/>
            <person name="Henrissat B."/>
            <person name="Hofmann G."/>
            <person name="Homan T."/>
            <person name="Horio T."/>
            <person name="Horiuchi H."/>
            <person name="James S."/>
            <person name="Jones M."/>
            <person name="Karaffa L."/>
            <person name="Karanyi Z."/>
            <person name="Kato M."/>
            <person name="Keller N."/>
            <person name="Kelly D.E."/>
            <person name="Kiel J.A."/>
            <person name="Kim J.M."/>
            <person name="van der Klei I.J."/>
            <person name="Klis F.M."/>
            <person name="Kovalchuk A."/>
            <person name="Krasevec N."/>
            <person name="Kubicek C.P."/>
            <person name="Liu B."/>
            <person name="Maccabe A."/>
            <person name="Meyer V."/>
            <person name="Mirabito P."/>
            <person name="Miskei M."/>
            <person name="Mos M."/>
            <person name="Mullins J."/>
            <person name="Nelson D.R."/>
            <person name="Nielsen J."/>
            <person name="Oakley B.R."/>
            <person name="Osmani S.A."/>
            <person name="Pakula T."/>
            <person name="Paszewski A."/>
            <person name="Paulsen I."/>
            <person name="Pilsyk S."/>
            <person name="Pocsi I."/>
            <person name="Punt P.J."/>
            <person name="Ram A.F."/>
            <person name="Ren Q."/>
            <person name="Robellet X."/>
            <person name="Robson G."/>
            <person name="Seiboth B."/>
            <person name="van Solingen P."/>
            <person name="Specht T."/>
            <person name="Sun J."/>
            <person name="Taheri-Talesh N."/>
            <person name="Takeshita N."/>
            <person name="Ussery D."/>
            <person name="vanKuyk P.A."/>
            <person name="Visser H."/>
            <person name="van de Vondervoort P.J."/>
            <person name="de Vries R.P."/>
            <person name="Walton J."/>
            <person name="Xiang X."/>
            <person name="Xiong Y."/>
            <person name="Zeng A.P."/>
            <person name="Brandt B.W."/>
            <person name="Cornell M.J."/>
            <person name="van den Hondel C.A."/>
            <person name="Visser J."/>
            <person name="Oliver S.G."/>
            <person name="Turner G."/>
        </authorList>
    </citation>
    <scope>GENOME REANNOTATION</scope>
    <source>
        <strain>FGSC A4 / ATCC 38163 / CBS 112.46 / NRRL 194 / M139</strain>
    </source>
</reference>
<proteinExistence type="evidence at transcript level"/>
<comment type="function">
    <text evidence="1">Involved in cell death (apoptosis).</text>
</comment>
<comment type="similarity">
    <text evidence="4">Belongs to the peptidase C14B family.</text>
</comment>
<comment type="sequence caution" evidence="4">
    <conflict type="erroneous gene model prediction">
        <sequence resource="EMBL-CDS" id="CBF81352"/>
    </conflict>
</comment>
<name>MCA1_EMENI</name>
<protein>
    <recommendedName>
        <fullName>Metacaspase-1</fullName>
        <ecNumber>3.4.22.-</ecNumber>
    </recommendedName>
</protein>
<keyword id="KW-0053">Apoptosis</keyword>
<keyword id="KW-0378">Hydrolase</keyword>
<keyword id="KW-0645">Protease</keyword>
<keyword id="KW-1185">Reference proteome</keyword>
<keyword id="KW-0788">Thiol protease</keyword>
<keyword id="KW-0865">Zymogen</keyword>
<feature type="propeptide" id="PRO_0000333648" evidence="2">
    <location>
        <begin position="1"/>
        <end status="unknown"/>
    </location>
</feature>
<feature type="chain" id="PRO_0000333649" description="Metacaspase-1">
    <location>
        <begin status="unknown"/>
        <end position="404"/>
    </location>
</feature>
<feature type="region of interest" description="Disordered" evidence="3">
    <location>
        <begin position="1"/>
        <end position="97"/>
    </location>
</feature>
<feature type="active site" evidence="1">
    <location>
        <position position="195"/>
    </location>
</feature>
<feature type="active site" evidence="1">
    <location>
        <position position="251"/>
    </location>
</feature>
<accession>Q8J140</accession>
<accession>C8VFM8</accession>
<accession>Q5B168</accession>
<gene>
    <name type="primary">casA</name>
    <name type="ORF">AN5712</name>
</gene>
<evidence type="ECO:0000250" key="1"/>
<evidence type="ECO:0000255" key="2"/>
<evidence type="ECO:0000256" key="3">
    <source>
        <dbReference type="SAM" id="MobiDB-lite"/>
    </source>
</evidence>
<evidence type="ECO:0000305" key="4"/>
<sequence length="404" mass="44598">MHHHHQQPSYGSGYPGQAYRQQQNPYPQYGHPSPQPYPPQNGYSHPSSGYPPSPAPPNGGQMYHGRQPSYPPNQYPPAHGGPTAPPTNPQAFGHGAPQGYNFQYSRCTGKRKALLIGINYFGQKGQLRGCINDVKNMSTYLNQNFGYAREDMVILTDDQQNPMSQPTKANILRAMHWLVKDAQPNDSLFFHYSGHGGQTPDLDGDEDDGYDEVIYPVDFRVAGHIVDDEMHRIMVKPLQPGVRLTAIFDSCHSGSALDLPYIYSTQGILKEPNLAKEAGQGLLGVISSYARGDMGGMMSTAVGFLKKAAKGDEAYQRTKQTKTSPADVIMWSGSKDDQTSQDAQIAGQATGAMSWAFITAMRKNPQQSYVQLLNSIRDELSTRYTQKPQLSSSHPLDVNLLYVM</sequence>